<keyword id="KW-0002">3D-structure</keyword>
<keyword id="KW-1185">Reference proteome</keyword>
<keyword id="KW-0804">Transcription</keyword>
<keyword id="KW-0805">Transcription regulation</keyword>
<reference key="1">
    <citation type="journal article" date="1993" name="J. Bacteriol.">
        <title>The asiA gene of bacteriophage T4 codes for the anti-sigma 70 protein.</title>
        <authorList>
            <person name="Orsini G."/>
            <person name="Ouhammouch M."/>
            <person name="Le Caer J.-P."/>
            <person name="Brody E.N."/>
        </authorList>
    </citation>
    <scope>NUCLEOTIDE SEQUENCE [GENOMIC DNA]</scope>
    <source>
        <strain>D</strain>
    </source>
</reference>
<reference key="2">
    <citation type="journal article" date="2003" name="Microbiol. Mol. Biol. Rev.">
        <title>Bacteriophage T4 genome.</title>
        <authorList>
            <person name="Miller E.S."/>
            <person name="Kutter E."/>
            <person name="Mosig G."/>
            <person name="Arisaka F."/>
            <person name="Kunisawa T."/>
            <person name="Ruger W."/>
        </authorList>
    </citation>
    <scope>NUCLEOTIDE SEQUENCE [LARGE SCALE GENOMIC DNA]</scope>
</reference>
<reference key="3">
    <citation type="journal article" date="1994" name="J. Bacteriol.">
        <title>The asiA gene product of bacteriophage T4 is required for middle mode RNA synthesis.</title>
        <authorList>
            <person name="Ouhammouch M."/>
            <person name="Orsini G."/>
            <person name="Brody E.N."/>
        </authorList>
    </citation>
    <scope>FUNCTION</scope>
</reference>
<reference key="4">
    <citation type="journal article" date="2001" name="J. Biol. Chem.">
        <title>Conserved regions 4.1 and 4.2 of sigma(70) constitute the recognition sites for the anti-sigma factor AsiA, and AsiA is a dimer free in solution.</title>
        <authorList>
            <person name="Urbauer J.L."/>
            <person name="Adelman K."/>
            <person name="Urbauer R.J."/>
            <person name="Simeonov M.F."/>
            <person name="Gilmore J.M."/>
            <person name="Zolkiewski M."/>
            <person name="Brody E.N."/>
        </authorList>
    </citation>
    <scope>STRUCTURE BY NMR</scope>
</reference>
<reference key="5">
    <citation type="journal article" date="2004" name="EMBO J.">
        <title>T4 AsiA blocks DNA recognition by remodeling sigma70 region 4.</title>
        <authorList>
            <person name="Lambert L.J."/>
            <person name="Wei Y."/>
            <person name="Schirf V."/>
            <person name="Demeler B."/>
            <person name="Werner M.H."/>
        </authorList>
    </citation>
    <scope>STRUCTURE BY NMR IN COMPLEX WITH HOST RPOD</scope>
    <scope>FUNCTION</scope>
</reference>
<proteinExistence type="evidence at protein level"/>
<organism>
    <name type="scientific">Enterobacteria phage T4</name>
    <name type="common">Bacteriophage T4</name>
    <dbReference type="NCBI Taxonomy" id="10665"/>
    <lineage>
        <taxon>Viruses</taxon>
        <taxon>Duplodnaviria</taxon>
        <taxon>Heunggongvirae</taxon>
        <taxon>Uroviricota</taxon>
        <taxon>Caudoviricetes</taxon>
        <taxon>Straboviridae</taxon>
        <taxon>Tevenvirinae</taxon>
        <taxon>Tequatrovirus</taxon>
    </lineage>
</organism>
<dbReference type="EMBL" id="M99441">
    <property type="protein sequence ID" value="AAA32480.1"/>
    <property type="molecule type" value="Genomic_DNA"/>
</dbReference>
<dbReference type="EMBL" id="AF158101">
    <property type="protein sequence ID" value="AAD42539.1"/>
    <property type="molecule type" value="Genomic_DNA"/>
</dbReference>
<dbReference type="RefSeq" id="NP_049866.1">
    <property type="nucleotide sequence ID" value="NC_000866.4"/>
</dbReference>
<dbReference type="PDB" id="1JR5">
    <property type="method" value="NMR"/>
    <property type="chains" value="A/B=1-90"/>
</dbReference>
<dbReference type="PDB" id="1TKV">
    <property type="method" value="NMR"/>
    <property type="chains" value="A/B=1-90"/>
</dbReference>
<dbReference type="PDB" id="1TL6">
    <property type="method" value="NMR"/>
    <property type="chains" value="A=1-90"/>
</dbReference>
<dbReference type="PDB" id="1TLH">
    <property type="method" value="NMR"/>
    <property type="chains" value="A=1-90"/>
</dbReference>
<dbReference type="PDB" id="6K4Y">
    <property type="method" value="EM"/>
    <property type="resolution" value="3.79 A"/>
    <property type="chains" value="I=1-90"/>
</dbReference>
<dbReference type="PDBsum" id="1JR5"/>
<dbReference type="PDBsum" id="1TKV"/>
<dbReference type="PDBsum" id="1TL6"/>
<dbReference type="PDBsum" id="1TLH"/>
<dbReference type="PDBsum" id="6K4Y"/>
<dbReference type="BMRB" id="P32267"/>
<dbReference type="EMDB" id="EMD-9916"/>
<dbReference type="SMR" id="P32267"/>
<dbReference type="DIP" id="DIP-60748N"/>
<dbReference type="IntAct" id="P32267">
    <property type="interactions" value="4"/>
</dbReference>
<dbReference type="GeneID" id="1258709"/>
<dbReference type="KEGG" id="vg:1258709"/>
<dbReference type="OrthoDB" id="22548at10239"/>
<dbReference type="EvolutionaryTrace" id="P32267"/>
<dbReference type="Proteomes" id="UP000009087">
    <property type="component" value="Segment"/>
</dbReference>
<dbReference type="GO" id="GO:0006355">
    <property type="term" value="P:regulation of DNA-templated transcription"/>
    <property type="evidence" value="ECO:0007669"/>
    <property type="project" value="InterPro"/>
</dbReference>
<dbReference type="Gene3D" id="1.10.1810.10">
    <property type="entry name" value="Anti-Sigma Factor A"/>
    <property type="match status" value="1"/>
</dbReference>
<dbReference type="InterPro" id="IPR015100">
    <property type="entry name" value="AsiA"/>
</dbReference>
<dbReference type="InterPro" id="IPR036486">
    <property type="entry name" value="AsiA_sf"/>
</dbReference>
<dbReference type="Pfam" id="PF09010">
    <property type="entry name" value="AsiA"/>
    <property type="match status" value="1"/>
</dbReference>
<dbReference type="SUPFAM" id="SSF69070">
    <property type="entry name" value="Anti-sigma factor AsiA"/>
    <property type="match status" value="1"/>
</dbReference>
<sequence length="90" mass="10590">MNKNIDTVREIITVASILIKFSREDIVENRANFIAFLNEIGVTHEGRKLNQNSFRKIVSELTQEDKKTLIDEFNEGFEGVYRYLEMYTNK</sequence>
<protein>
    <recommendedName>
        <fullName>10 kDa anti-sigma factor</fullName>
    </recommendedName>
    <alternativeName>
        <fullName>10 kDa RNA polymerase-associated protein</fullName>
    </alternativeName>
    <alternativeName>
        <fullName>Audrey Stevens' inhibitor</fullName>
    </alternativeName>
</protein>
<comment type="function">
    <text evidence="1 2">Transcriptional inhibitor. Inhibits sigma 70-directed transcription by weakening its interaction with the core of the host's RNA polymerase. This allows Gp55 to successfully compete for the core enzyme. Plays an important role during the prereplicative period of phage T4 development.</text>
</comment>
<comment type="subunit">
    <text evidence="1">Interacts with the host sigma factor RpoD, and thereby inhibits its interaction with the catalytic core of the host RNA polymerase.</text>
</comment>
<comment type="interaction">
    <interactant intactId="EBI-2124737">
        <id>P32267</id>
    </interactant>
    <interactant intactId="EBI-544996">
        <id>P0A8V2</id>
        <label>rpoB</label>
    </interactant>
    <organismsDiffer>true</organismsDiffer>
    <experiments>4</experiments>
</comment>
<comment type="interaction">
    <interactant intactId="EBI-2124737">
        <id>P32267</id>
    </interactant>
    <interactant intactId="EBI-545104">
        <id>P00579</id>
        <label>rpoD</label>
    </interactant>
    <organismsDiffer>true</organismsDiffer>
    <experiments>7</experiments>
</comment>
<accession>P32267</accession>
<organismHost>
    <name type="scientific">Escherichia coli</name>
    <dbReference type="NCBI Taxonomy" id="562"/>
</organismHost>
<name>ASIA_BPT4</name>
<evidence type="ECO:0000269" key="1">
    <source>
    </source>
</evidence>
<evidence type="ECO:0000269" key="2">
    <source>
    </source>
</evidence>
<evidence type="ECO:0007829" key="3">
    <source>
        <dbReference type="PDB" id="1JR5"/>
    </source>
</evidence>
<feature type="chain" id="PRO_0000164919" description="10 kDa anti-sigma factor">
    <location>
        <begin position="1"/>
        <end position="90"/>
    </location>
</feature>
<feature type="helix" evidence="3">
    <location>
        <begin position="4"/>
        <end position="20"/>
    </location>
</feature>
<feature type="helix" evidence="3">
    <location>
        <begin position="24"/>
        <end position="27"/>
    </location>
</feature>
<feature type="helix" evidence="3">
    <location>
        <begin position="30"/>
        <end position="40"/>
    </location>
</feature>
<feature type="strand" evidence="3">
    <location>
        <begin position="44"/>
        <end position="47"/>
    </location>
</feature>
<feature type="helix" evidence="3">
    <location>
        <begin position="52"/>
        <end position="59"/>
    </location>
</feature>
<feature type="helix" evidence="3">
    <location>
        <begin position="63"/>
        <end position="70"/>
    </location>
</feature>
<feature type="strand" evidence="3">
    <location>
        <begin position="73"/>
        <end position="77"/>
    </location>
</feature>
<feature type="turn" evidence="3">
    <location>
        <begin position="78"/>
        <end position="82"/>
    </location>
</feature>
<feature type="helix" evidence="3">
    <location>
        <begin position="83"/>
        <end position="87"/>
    </location>
</feature>
<gene>
    <name type="primary">asiA</name>
</gene>